<comment type="subcellular location">
    <subcellularLocation>
        <location evidence="1">Cytoplasm</location>
    </subcellularLocation>
</comment>
<comment type="developmental stage">
    <text evidence="4">During the mosquito stage, specifically expressed at day 4 post-infection (PubMed:24893340). Not expressed in sporozoites in the mosquito salivary glands and during the liver stage in the mouse host (PubMed:24893340).</text>
</comment>
<comment type="disruption phenotype">
    <text evidence="4">Normal blood stage development in the mouse host (PubMed:24893340). In the mosquito, development of oocysts, and sporozoite gliding motility and invasion of salivary glands are normal (PubMed:24893340).</text>
</comment>
<comment type="similarity">
    <text evidence="6">Belongs to the peptidase A1 family.</text>
</comment>
<comment type="caution">
    <text evidence="6">It is unclear if PMVII is glycosylated as other members of the same enzyme family, i.e. PMI and PMII, are not.</text>
</comment>
<accession>A0A509ALH1</accession>
<gene>
    <name evidence="5" type="primary">PMVII</name>
    <name evidence="7" type="ORF">PBANKA_0517600</name>
</gene>
<reference evidence="8" key="1">
    <citation type="journal article" date="2014" name="BMC Biol.">
        <title>A comprehensive evaluation of rodent malaria parasite genomes and gene expression.</title>
        <authorList>
            <person name="Otto T.D."/>
            <person name="Bohme U."/>
            <person name="Jackson A.P."/>
            <person name="Hunt M."/>
            <person name="Franke-Fayard B."/>
            <person name="Hoeijmakers W.A."/>
            <person name="Religa A.A."/>
            <person name="Robertson L."/>
            <person name="Sanders M."/>
            <person name="Ogun S.A."/>
            <person name="Cunningham D."/>
            <person name="Erhart A."/>
            <person name="Billker O."/>
            <person name="Khan S.M."/>
            <person name="Stunnenberg H.G."/>
            <person name="Langhorne J."/>
            <person name="Holder A.A."/>
            <person name="Waters A.P."/>
            <person name="Newbold C.I."/>
            <person name="Pain A."/>
            <person name="Berriman M."/>
            <person name="Janse C.J."/>
        </authorList>
    </citation>
    <scope>NUCLEOTIDE SEQUENCE [LARGE SCALE GENOMIC DNA]</scope>
    <source>
        <strain evidence="8">ANKA</strain>
    </source>
</reference>
<reference evidence="6" key="2">
    <citation type="journal article" date="2014" name="Mol. Biochem. Parasitol.">
        <title>Gene disruption reveals a dispensable role for plasmepsin VII in the Plasmodium berghei life cycle.</title>
        <authorList>
            <person name="Mastan B.S."/>
            <person name="Kumari A."/>
            <person name="Gupta D."/>
            <person name="Mishra S."/>
            <person name="Kumar K.A."/>
        </authorList>
    </citation>
    <scope>DEVELOPMENTAL STAGE</scope>
    <scope>DISRUPTION PHENOTYPE</scope>
</reference>
<organism evidence="8">
    <name type="scientific">Plasmodium berghei (strain Anka)</name>
    <dbReference type="NCBI Taxonomy" id="5823"/>
    <lineage>
        <taxon>Eukaryota</taxon>
        <taxon>Sar</taxon>
        <taxon>Alveolata</taxon>
        <taxon>Apicomplexa</taxon>
        <taxon>Aconoidasida</taxon>
        <taxon>Haemosporida</taxon>
        <taxon>Plasmodiidae</taxon>
        <taxon>Plasmodium</taxon>
        <taxon>Plasmodium (Vinckeia)</taxon>
    </lineage>
</organism>
<sequence>MKSVYHHFAIIFFLKLFLCNCILSIPKKTLGKGLFSLGLNEFKNNVDNNSLNILGELKNSKPFINKSFIQINEKKDNVLLLKLYKQNIASDKLSTYYGKIAIGENSENIFNVLFDTGSTEFWVPFKTCKFTKNNIHNKYERTQSFKYKYDDKGLPSVLEINYLSGKLVGFDGYDTVYLGPGFAIPHTNIAFATSIDIPVLEKFKWDGIIGLGFENEDSQKRGIKPFLDHLKDEKILTEKNYKNIFGYYITNTGGYITLGGIDNRFKRSPDEKIIWSPVSTEMGFWTIDILGIRKEKQPYMNERRDDEVIVKYEGFHDGSNKSIVDTGTFLIYAPKKTIENYLNDLTINSCEDKQKLPYIIFQIKSKEIESIKGLSVIELVLSPNDYVIEYIDEVNSTKECIIGIQSDEDNINGWTLGQVFLKSYYTIFDKDNLQIGFVRNKQTINDETYLNESFLRVSKKRNKKKSYNGPL</sequence>
<protein>
    <recommendedName>
        <fullName evidence="5">Plasmepsin VII</fullName>
        <ecNumber evidence="6">3.4.23.-</ecNumber>
    </recommendedName>
    <alternativeName>
        <fullName evidence="6">Plasmepsin 7</fullName>
    </alternativeName>
</protein>
<feature type="signal peptide" evidence="2">
    <location>
        <begin position="1"/>
        <end position="24"/>
    </location>
</feature>
<feature type="propeptide" id="PRO_0000453696" evidence="6">
    <location>
        <begin position="25"/>
        <end status="unknown"/>
    </location>
</feature>
<feature type="chain" id="PRO_5021436755" description="Plasmepsin VII" evidence="2">
    <location>
        <begin status="unknown"/>
        <end position="471"/>
    </location>
</feature>
<feature type="domain" description="Peptidase A1" evidence="3">
    <location>
        <begin position="96"/>
        <end position="438"/>
    </location>
</feature>
<feature type="active site" evidence="3">
    <location>
        <position position="115"/>
    </location>
</feature>
<feature type="active site" evidence="3">
    <location>
        <position position="325"/>
    </location>
</feature>
<proteinExistence type="evidence at transcript level"/>
<name>PLM7_PLABA</name>
<evidence type="ECO:0000250" key="1">
    <source>
        <dbReference type="UniProtKB" id="A0A2I0BRF1"/>
    </source>
</evidence>
<evidence type="ECO:0000255" key="2"/>
<evidence type="ECO:0000255" key="3">
    <source>
        <dbReference type="PROSITE-ProRule" id="PRU01103"/>
    </source>
</evidence>
<evidence type="ECO:0000269" key="4">
    <source>
    </source>
</evidence>
<evidence type="ECO:0000303" key="5">
    <source>
    </source>
</evidence>
<evidence type="ECO:0000305" key="6"/>
<evidence type="ECO:0000312" key="7">
    <source>
        <dbReference type="EMBL" id="VUC54589.1"/>
    </source>
</evidence>
<evidence type="ECO:0000312" key="8">
    <source>
        <dbReference type="Proteomes" id="UP000074855"/>
    </source>
</evidence>
<dbReference type="EC" id="3.4.23.-" evidence="6"/>
<dbReference type="EMBL" id="LK023120">
    <property type="protein sequence ID" value="VUC54589.1"/>
    <property type="molecule type" value="Genomic_DNA"/>
</dbReference>
<dbReference type="SMR" id="A0A509ALH1"/>
<dbReference type="STRING" id="5823.A0A509ALH1"/>
<dbReference type="VEuPathDB" id="PlasmoDB:PBANKA_0517600"/>
<dbReference type="InParanoid" id="A0A509ALH1"/>
<dbReference type="OMA" id="MGFWTID"/>
<dbReference type="Proteomes" id="UP000074855">
    <property type="component" value="Chromosome 5"/>
</dbReference>
<dbReference type="GO" id="GO:0005737">
    <property type="term" value="C:cytoplasm"/>
    <property type="evidence" value="ECO:0007669"/>
    <property type="project" value="UniProtKB-SubCell"/>
</dbReference>
<dbReference type="GO" id="GO:0004190">
    <property type="term" value="F:aspartic-type endopeptidase activity"/>
    <property type="evidence" value="ECO:0007669"/>
    <property type="project" value="UniProtKB-KW"/>
</dbReference>
<dbReference type="GO" id="GO:0006508">
    <property type="term" value="P:proteolysis"/>
    <property type="evidence" value="ECO:0007669"/>
    <property type="project" value="UniProtKB-KW"/>
</dbReference>
<dbReference type="CDD" id="cd05471">
    <property type="entry name" value="pepsin_like"/>
    <property type="match status" value="1"/>
</dbReference>
<dbReference type="Gene3D" id="2.40.70.10">
    <property type="entry name" value="Acid Proteases"/>
    <property type="match status" value="2"/>
</dbReference>
<dbReference type="InterPro" id="IPR001461">
    <property type="entry name" value="Aspartic_peptidase_A1"/>
</dbReference>
<dbReference type="InterPro" id="IPR034164">
    <property type="entry name" value="Pepsin-like_dom"/>
</dbReference>
<dbReference type="InterPro" id="IPR033121">
    <property type="entry name" value="PEPTIDASE_A1"/>
</dbReference>
<dbReference type="InterPro" id="IPR021109">
    <property type="entry name" value="Peptidase_aspartic_dom_sf"/>
</dbReference>
<dbReference type="PANTHER" id="PTHR47966">
    <property type="entry name" value="BETA-SITE APP-CLEAVING ENZYME, ISOFORM A-RELATED"/>
    <property type="match status" value="1"/>
</dbReference>
<dbReference type="PANTHER" id="PTHR47966:SF51">
    <property type="entry name" value="BETA-SITE APP-CLEAVING ENZYME, ISOFORM A-RELATED"/>
    <property type="match status" value="1"/>
</dbReference>
<dbReference type="Pfam" id="PF00026">
    <property type="entry name" value="Asp"/>
    <property type="match status" value="1"/>
</dbReference>
<dbReference type="PRINTS" id="PR00792">
    <property type="entry name" value="PEPSIN"/>
</dbReference>
<dbReference type="SUPFAM" id="SSF50630">
    <property type="entry name" value="Acid proteases"/>
    <property type="match status" value="1"/>
</dbReference>
<dbReference type="PROSITE" id="PS00141">
    <property type="entry name" value="ASP_PROTEASE"/>
    <property type="match status" value="1"/>
</dbReference>
<dbReference type="PROSITE" id="PS51767">
    <property type="entry name" value="PEPTIDASE_A1"/>
    <property type="match status" value="1"/>
</dbReference>
<keyword id="KW-0064">Aspartyl protease</keyword>
<keyword id="KW-0963">Cytoplasm</keyword>
<keyword id="KW-0378">Hydrolase</keyword>
<keyword id="KW-0645">Protease</keyword>
<keyword id="KW-1185">Reference proteome</keyword>
<keyword id="KW-0732">Signal</keyword>
<keyword id="KW-0865">Zymogen</keyword>